<feature type="chain" id="PRO_0000078549" description="Chaperone protein dnaK2">
    <location>
        <begin position="1"/>
        <end position="633"/>
    </location>
</feature>
<feature type="region of interest" description="Disordered" evidence="2">
    <location>
        <begin position="600"/>
        <end position="633"/>
    </location>
</feature>
<feature type="compositionally biased region" description="Acidic residues" evidence="2">
    <location>
        <begin position="624"/>
        <end position="633"/>
    </location>
</feature>
<feature type="modified residue" description="Phosphothreonine; by autocatalysis" evidence="1">
    <location>
        <position position="196"/>
    </location>
</feature>
<keyword id="KW-0067">ATP-binding</keyword>
<keyword id="KW-0143">Chaperone</keyword>
<keyword id="KW-0547">Nucleotide-binding</keyword>
<keyword id="KW-0597">Phosphoprotein</keyword>
<keyword id="KW-1185">Reference proteome</keyword>
<keyword id="KW-0346">Stress response</keyword>
<dbReference type="EMBL" id="BA000030">
    <property type="protein sequence ID" value="BAC74948.1"/>
    <property type="molecule type" value="Genomic_DNA"/>
</dbReference>
<dbReference type="SMR" id="Q826F6"/>
<dbReference type="GeneID" id="41544309"/>
<dbReference type="KEGG" id="sma:SAVERM_7237"/>
<dbReference type="eggNOG" id="COG0443">
    <property type="taxonomic scope" value="Bacteria"/>
</dbReference>
<dbReference type="HOGENOM" id="CLU_005965_2_1_11"/>
<dbReference type="OrthoDB" id="9766019at2"/>
<dbReference type="Proteomes" id="UP000000428">
    <property type="component" value="Chromosome"/>
</dbReference>
<dbReference type="GO" id="GO:0005524">
    <property type="term" value="F:ATP binding"/>
    <property type="evidence" value="ECO:0007669"/>
    <property type="project" value="UniProtKB-UniRule"/>
</dbReference>
<dbReference type="GO" id="GO:0140662">
    <property type="term" value="F:ATP-dependent protein folding chaperone"/>
    <property type="evidence" value="ECO:0007669"/>
    <property type="project" value="InterPro"/>
</dbReference>
<dbReference type="GO" id="GO:0051082">
    <property type="term" value="F:unfolded protein binding"/>
    <property type="evidence" value="ECO:0007669"/>
    <property type="project" value="InterPro"/>
</dbReference>
<dbReference type="CDD" id="cd10234">
    <property type="entry name" value="ASKHA_NBD_HSP70_DnaK-like"/>
    <property type="match status" value="1"/>
</dbReference>
<dbReference type="FunFam" id="2.60.34.10:FF:000014">
    <property type="entry name" value="Chaperone protein DnaK HSP70"/>
    <property type="match status" value="1"/>
</dbReference>
<dbReference type="FunFam" id="3.30.420.40:FF:000004">
    <property type="entry name" value="Molecular chaperone DnaK"/>
    <property type="match status" value="1"/>
</dbReference>
<dbReference type="FunFam" id="3.90.640.10:FF:000003">
    <property type="entry name" value="Molecular chaperone DnaK"/>
    <property type="match status" value="1"/>
</dbReference>
<dbReference type="Gene3D" id="1.20.1270.10">
    <property type="match status" value="1"/>
</dbReference>
<dbReference type="Gene3D" id="3.30.420.40">
    <property type="match status" value="2"/>
</dbReference>
<dbReference type="Gene3D" id="3.90.640.10">
    <property type="entry name" value="Actin, Chain A, domain 4"/>
    <property type="match status" value="1"/>
</dbReference>
<dbReference type="Gene3D" id="2.60.34.10">
    <property type="entry name" value="Substrate Binding Domain Of DNAk, Chain A, domain 1"/>
    <property type="match status" value="1"/>
</dbReference>
<dbReference type="HAMAP" id="MF_00332">
    <property type="entry name" value="DnaK"/>
    <property type="match status" value="1"/>
</dbReference>
<dbReference type="InterPro" id="IPR043129">
    <property type="entry name" value="ATPase_NBD"/>
</dbReference>
<dbReference type="InterPro" id="IPR012725">
    <property type="entry name" value="Chaperone_DnaK"/>
</dbReference>
<dbReference type="InterPro" id="IPR018181">
    <property type="entry name" value="Heat_shock_70_CS"/>
</dbReference>
<dbReference type="InterPro" id="IPR029048">
    <property type="entry name" value="HSP70_C_sf"/>
</dbReference>
<dbReference type="InterPro" id="IPR029047">
    <property type="entry name" value="HSP70_peptide-bd_sf"/>
</dbReference>
<dbReference type="InterPro" id="IPR013126">
    <property type="entry name" value="Hsp_70_fam"/>
</dbReference>
<dbReference type="NCBIfam" id="NF001413">
    <property type="entry name" value="PRK00290.1"/>
    <property type="match status" value="1"/>
</dbReference>
<dbReference type="NCBIfam" id="TIGR02350">
    <property type="entry name" value="prok_dnaK"/>
    <property type="match status" value="1"/>
</dbReference>
<dbReference type="PANTHER" id="PTHR19375">
    <property type="entry name" value="HEAT SHOCK PROTEIN 70KDA"/>
    <property type="match status" value="1"/>
</dbReference>
<dbReference type="Pfam" id="PF00012">
    <property type="entry name" value="HSP70"/>
    <property type="match status" value="1"/>
</dbReference>
<dbReference type="PRINTS" id="PR00301">
    <property type="entry name" value="HEATSHOCK70"/>
</dbReference>
<dbReference type="SUPFAM" id="SSF53067">
    <property type="entry name" value="Actin-like ATPase domain"/>
    <property type="match status" value="2"/>
</dbReference>
<dbReference type="SUPFAM" id="SSF100920">
    <property type="entry name" value="Heat shock protein 70kD (HSP70), peptide-binding domain"/>
    <property type="match status" value="1"/>
</dbReference>
<dbReference type="PROSITE" id="PS00297">
    <property type="entry name" value="HSP70_1"/>
    <property type="match status" value="1"/>
</dbReference>
<dbReference type="PROSITE" id="PS00329">
    <property type="entry name" value="HSP70_2"/>
    <property type="match status" value="1"/>
</dbReference>
<dbReference type="PROSITE" id="PS01036">
    <property type="entry name" value="HSP70_3"/>
    <property type="match status" value="1"/>
</dbReference>
<name>DNAK2_STRAW</name>
<proteinExistence type="inferred from homology"/>
<evidence type="ECO:0000250" key="1"/>
<evidence type="ECO:0000256" key="2">
    <source>
        <dbReference type="SAM" id="MobiDB-lite"/>
    </source>
</evidence>
<evidence type="ECO:0000305" key="3"/>
<comment type="function">
    <text evidence="1">Acts as a chaperone.</text>
</comment>
<comment type="induction">
    <text evidence="1">By stress conditions e.g. heat shock (By similarity).</text>
</comment>
<comment type="similarity">
    <text evidence="3">Belongs to the heat shock protein 70 family.</text>
</comment>
<reference key="1">
    <citation type="journal article" date="2001" name="Proc. Natl. Acad. Sci. U.S.A.">
        <title>Genome sequence of an industrial microorganism Streptomyces avermitilis: deducing the ability of producing secondary metabolites.</title>
        <authorList>
            <person name="Omura S."/>
            <person name="Ikeda H."/>
            <person name="Ishikawa J."/>
            <person name="Hanamoto A."/>
            <person name="Takahashi C."/>
            <person name="Shinose M."/>
            <person name="Takahashi Y."/>
            <person name="Horikawa H."/>
            <person name="Nakazawa H."/>
            <person name="Osonoe T."/>
            <person name="Kikuchi H."/>
            <person name="Shiba T."/>
            <person name="Sakaki Y."/>
            <person name="Hattori M."/>
        </authorList>
    </citation>
    <scope>NUCLEOTIDE SEQUENCE [LARGE SCALE GENOMIC DNA]</scope>
    <source>
        <strain>ATCC 31267 / DSM 46492 / JCM 5070 / NBRC 14893 / NCIMB 12804 / NRRL 8165 / MA-4680</strain>
    </source>
</reference>
<reference key="2">
    <citation type="journal article" date="2003" name="Nat. Biotechnol.">
        <title>Complete genome sequence and comparative analysis of the industrial microorganism Streptomyces avermitilis.</title>
        <authorList>
            <person name="Ikeda H."/>
            <person name="Ishikawa J."/>
            <person name="Hanamoto A."/>
            <person name="Shinose M."/>
            <person name="Kikuchi H."/>
            <person name="Shiba T."/>
            <person name="Sakaki Y."/>
            <person name="Hattori M."/>
            <person name="Omura S."/>
        </authorList>
    </citation>
    <scope>NUCLEOTIDE SEQUENCE [LARGE SCALE GENOMIC DNA]</scope>
    <source>
        <strain>ATCC 31267 / DSM 46492 / JCM 5070 / NBRC 14893 / NCIMB 12804 / NRRL 8165 / MA-4680</strain>
    </source>
</reference>
<sequence>MAKAVGIDLGTTNSVIAVWEGGEPSVVPNSEGNRTTPSVVAFTDTGERLVGQLARRQAILNPKGTIYSAKRFIGRHFDEISDEARAVTYDVVEGDGGAARFKVRDKLYAPEEISAQVLRKLADDASKQLGERVTEAVITVPAYFNDAQRTATKDAGRIAGLEVLRIINEPTAAALAYGMDKKEHETVLVFDLGGGTFDVSILDVGDGVVEVRSTAGDSHLGGDDFDRRLVDYLADDFQQENGIDLRKDPQALQRLFEAAEKAKTELSSVTQTQVSLPFITADASGPKHLTDTVMRSTFEQITSDLVERCLGPVQQAMADAKVGESDIDEVILVGGSTRIPAVQALVRRLTGGKDPNMSVNPDEVVALGAAIQAGVLKGEVKDVLLLDVTPLSLGVETRGGVMTKIIERNTTIPVRRSETFSTAEDNQPAVDVVVLQGERERAADNRVLGRFQLTDIRPAPRGEPQVEVTFDIDANGILNVTARDKDTGKEQGITISESSNLDRSEVERMVQEAERNQGQDQALREAVDARNELDAVAYQVEKRLAELGDAAPAHEKARAEMLVSDARAAVKEEAGVERVRPLTSELQQVLAGLAAHQGAATADGGPAQHAATGGPTSGGGGGDDVIDAEFDKG</sequence>
<gene>
    <name type="primary">dnaK2</name>
    <name type="ordered locus">SAV_7237</name>
</gene>
<protein>
    <recommendedName>
        <fullName>Chaperone protein dnaK2</fullName>
    </recommendedName>
    <alternativeName>
        <fullName>HSP70-2</fullName>
    </alternativeName>
    <alternativeName>
        <fullName>Heat shock 70 kDa protein 2</fullName>
    </alternativeName>
    <alternativeName>
        <fullName>Heat shock protein 70-2</fullName>
    </alternativeName>
</protein>
<organism>
    <name type="scientific">Streptomyces avermitilis (strain ATCC 31267 / DSM 46492 / JCM 5070 / NBRC 14893 / NCIMB 12804 / NRRL 8165 / MA-4680)</name>
    <dbReference type="NCBI Taxonomy" id="227882"/>
    <lineage>
        <taxon>Bacteria</taxon>
        <taxon>Bacillati</taxon>
        <taxon>Actinomycetota</taxon>
        <taxon>Actinomycetes</taxon>
        <taxon>Kitasatosporales</taxon>
        <taxon>Streptomycetaceae</taxon>
        <taxon>Streptomyces</taxon>
    </lineage>
</organism>
<accession>Q826F6</accession>